<evidence type="ECO:0000255" key="1">
    <source>
        <dbReference type="HAMAP-Rule" id="MF_04076"/>
    </source>
</evidence>
<evidence type="ECO:0000256" key="2">
    <source>
        <dbReference type="SAM" id="MobiDB-lite"/>
    </source>
</evidence>
<reference key="1">
    <citation type="journal article" date="1988" name="J. Gastroenterol. Hepatol.">
        <title>Nucleotide sequence of a hepatitis B virus genome of subtype adw isolated from a Philippino: comparison with the reported three genomes of the same subtype.</title>
        <authorList>
            <person name="Estacio R.C."/>
            <person name="Chavez C.C."/>
            <person name="Okamoto H."/>
            <person name="Lingao A.L."/>
            <person name="Reyes M.T."/>
            <person name="Domingo E."/>
            <person name="Mayumi M."/>
        </authorList>
    </citation>
    <scope>NUCLEOTIDE SEQUENCE [GENOMIC DNA]</scope>
</reference>
<organism>
    <name type="scientific">Hepatitis B virus genotype A1 subtype adw (isolate Philippines/pFDW294/1988)</name>
    <name type="common">HBV-A</name>
    <dbReference type="NCBI Taxonomy" id="31514"/>
    <lineage>
        <taxon>Viruses</taxon>
        <taxon>Riboviria</taxon>
        <taxon>Pararnavirae</taxon>
        <taxon>Artverviricota</taxon>
        <taxon>Revtraviricetes</taxon>
        <taxon>Blubervirales</taxon>
        <taxon>Hepadnaviridae</taxon>
        <taxon>Orthohepadnavirus</taxon>
        <taxon>Hepatitis B virus</taxon>
    </lineage>
</organism>
<comment type="function">
    <text evidence="1">Self assembles to form an icosahedral capsid. Most capsids appear to be large particles with an icosahedral symmetry of T=4 and consist of 240 copies of capsid protein, though a fraction forms smaller T=3 particles consisting of 180 capsid proteins. Entering capsids are transported along microtubules to the nucleus. Phosphorylation of the capsid is thought to induce exposure of nuclear localization signal in the C-terminal portion of the capsid protein that allows binding to the nuclear pore complex via the importin (karyopherin-) alpha and beta. Capsids are imported in intact form through the nuclear pore into the nuclear basket, where it probably binds NUP153. Only capsids that contain the mature viral genome can release the viral DNA and capsid protein into the nucleoplasm. Immature capsids get stuck in the basket. Capsids encapsulate the pre-genomic RNA and the P protein. Pre-genomic RNA is reverse-transcribed into DNA while the capsid is still in the cytoplasm. The capsid can then either be directed to the nucleus, providing more genomes for transcription, or bud through the endoplasmic reticulum to provide new virions.</text>
</comment>
<comment type="subunit">
    <text evidence="1">Homodimerizes, then multimerizes. Interacts with cytosol exposed regions of viral L glycoprotein present in the reticulum-to-Golgi compartment. Interacts with human FLNB. Phosphorylated form interacts with host importin alpha; this interaction depends on the exposure of the NLS, which itself depends upon genome maturation and/or phosphorylation of the capsid protein. Interacts with host NUP153.</text>
</comment>
<comment type="subcellular location">
    <subcellularLocation>
        <location evidence="1">Virion</location>
    </subcellularLocation>
    <subcellularLocation>
        <location evidence="1">Host cytoplasm</location>
    </subcellularLocation>
</comment>
<comment type="alternative products">
    <event type="alternative initiation"/>
    <isoform>
        <id>P0C694-1</id>
        <name>Capsid protein</name>
        <sequence type="displayed"/>
    </isoform>
    <isoform>
        <id>Q81105-1</id>
        <name>External core antigen</name>
        <sequence type="external"/>
    </isoform>
</comment>
<comment type="PTM">
    <text evidence="1">Phosphorylated by host SRPK1, SRPK2, and maybe protein kinase C or GAPDH. Phosphorylation is critical for pregenomic RNA packaging. Protein kinase C phosphorylation is stimulated by HBx protein and may play a role in transport of the viral genome to the nucleus at the late step during the viral replication cycle.</text>
</comment>
<comment type="similarity">
    <text evidence="1">Belongs to the orthohepadnavirus core antigen family.</text>
</comment>
<comment type="sequence caution">
    <conflict type="erroneous initiation">
        <sequence resource="EMBL-CDS" id="AAA69681"/>
    </conflict>
</comment>
<gene>
    <name evidence="1" type="primary">C</name>
</gene>
<dbReference type="EMBL" id="M57663">
    <property type="protein sequence ID" value="AAA69681.2"/>
    <property type="status" value="ALT_INIT"/>
    <property type="molecule type" value="Genomic_DNA"/>
</dbReference>
<dbReference type="Proteomes" id="UP000007908">
    <property type="component" value="Genome"/>
</dbReference>
<dbReference type="GO" id="GO:0043657">
    <property type="term" value="C:host cell"/>
    <property type="evidence" value="ECO:0007669"/>
    <property type="project" value="GOC"/>
</dbReference>
<dbReference type="GO" id="GO:0030430">
    <property type="term" value="C:host cell cytoplasm"/>
    <property type="evidence" value="ECO:0007669"/>
    <property type="project" value="UniProtKB-SubCell"/>
</dbReference>
<dbReference type="GO" id="GO:0039619">
    <property type="term" value="C:T=4 icosahedral viral capsid"/>
    <property type="evidence" value="ECO:0007669"/>
    <property type="project" value="UniProtKB-UniRule"/>
</dbReference>
<dbReference type="GO" id="GO:0003677">
    <property type="term" value="F:DNA binding"/>
    <property type="evidence" value="ECO:0007669"/>
    <property type="project" value="UniProtKB-UniRule"/>
</dbReference>
<dbReference type="GO" id="GO:0003723">
    <property type="term" value="F:RNA binding"/>
    <property type="evidence" value="ECO:0007669"/>
    <property type="project" value="UniProtKB-UniRule"/>
</dbReference>
<dbReference type="GO" id="GO:0005198">
    <property type="term" value="F:structural molecule activity"/>
    <property type="evidence" value="ECO:0007669"/>
    <property type="project" value="UniProtKB-UniRule"/>
</dbReference>
<dbReference type="GO" id="GO:0075521">
    <property type="term" value="P:microtubule-dependent intracellular transport of viral material towards nucleus"/>
    <property type="evidence" value="ECO:0007669"/>
    <property type="project" value="UniProtKB-UniRule"/>
</dbReference>
<dbReference type="GO" id="GO:0046718">
    <property type="term" value="P:symbiont entry into host cell"/>
    <property type="evidence" value="ECO:0007669"/>
    <property type="project" value="UniProtKB-UniRule"/>
</dbReference>
<dbReference type="GO" id="GO:0075732">
    <property type="term" value="P:viral penetration into host nucleus"/>
    <property type="evidence" value="ECO:0007669"/>
    <property type="project" value="UniProtKB-UniRule"/>
</dbReference>
<dbReference type="FunFam" id="1.10.4090.10:FF:000001">
    <property type="entry name" value="Capsid protein"/>
    <property type="match status" value="1"/>
</dbReference>
<dbReference type="Gene3D" id="1.10.4090.10">
    <property type="entry name" value="Viral capsid, core domain supefamily, Hepatitis B virus"/>
    <property type="match status" value="1"/>
</dbReference>
<dbReference type="HAMAP" id="MF_04076">
    <property type="entry name" value="HBV_HBEAG"/>
    <property type="match status" value="1"/>
</dbReference>
<dbReference type="InterPro" id="IPR002006">
    <property type="entry name" value="Hepatitis_core"/>
</dbReference>
<dbReference type="InterPro" id="IPR036459">
    <property type="entry name" value="Viral_capsid_core_dom_sf_HBV"/>
</dbReference>
<dbReference type="Pfam" id="PF00906">
    <property type="entry name" value="Hepatitis_core"/>
    <property type="match status" value="2"/>
</dbReference>
<dbReference type="SUPFAM" id="SSF47852">
    <property type="entry name" value="Hepatitis B viral capsid (hbcag)"/>
    <property type="match status" value="1"/>
</dbReference>
<proteinExistence type="inferred from homology"/>
<protein>
    <recommendedName>
        <fullName evidence="1">Capsid protein</fullName>
    </recommendedName>
    <alternativeName>
        <fullName evidence="1">Core antigen</fullName>
    </alternativeName>
    <alternativeName>
        <fullName evidence="1">Core protein</fullName>
    </alternativeName>
    <alternativeName>
        <fullName evidence="1">HBcAg</fullName>
    </alternativeName>
    <alternativeName>
        <fullName evidence="1">p21.5</fullName>
    </alternativeName>
</protein>
<name>CAPSD_HBVA5</name>
<organismHost>
    <name type="scientific">Homo sapiens</name>
    <name type="common">Human</name>
    <dbReference type="NCBI Taxonomy" id="9606"/>
</organismHost>
<organismHost>
    <name type="scientific">Pan troglodytes</name>
    <name type="common">Chimpanzee</name>
    <dbReference type="NCBI Taxonomy" id="9598"/>
</organismHost>
<feature type="chain" id="PRO_0000324353" description="Capsid protein">
    <location>
        <begin position="1"/>
        <end position="185"/>
    </location>
</feature>
<feature type="repeat" description="1; half-length">
    <location>
        <begin position="157"/>
        <end position="163"/>
    </location>
</feature>
<feature type="repeat" description="2">
    <location>
        <begin position="164"/>
        <end position="171"/>
    </location>
</feature>
<feature type="repeat" description="3">
    <location>
        <begin position="172"/>
        <end position="179"/>
    </location>
</feature>
<feature type="region of interest" description="Disordered" evidence="2">
    <location>
        <begin position="136"/>
        <end position="185"/>
    </location>
</feature>
<feature type="region of interest" description="3 X 8 AA repeats of S-P-R-R-R-[PR]-S-Q">
    <location>
        <begin position="157"/>
        <end position="179"/>
    </location>
</feature>
<feature type="region of interest" description="RNA binding" evidence="1">
    <location>
        <begin position="179"/>
        <end position="185"/>
    </location>
</feature>
<feature type="short sequence motif" description="Bipartite nuclear localization signal" evidence="1">
    <location>
        <begin position="160"/>
        <end position="177"/>
    </location>
</feature>
<feature type="compositionally biased region" description="Basic residues" evidence="2">
    <location>
        <begin position="149"/>
        <end position="178"/>
    </location>
</feature>
<feature type="modified residue" description="Phosphoserine; by host" evidence="1">
    <location>
        <position position="157"/>
    </location>
</feature>
<feature type="modified residue" description="Phosphoserine; by host" evidence="1">
    <location>
        <position position="164"/>
    </location>
</feature>
<feature type="modified residue" description="Phosphoserine; by host" evidence="1">
    <location>
        <position position="172"/>
    </location>
</feature>
<accession>P0C694</accession>
<keyword id="KW-0024">Alternative initiation</keyword>
<keyword id="KW-0167">Capsid protein</keyword>
<keyword id="KW-1176">Cytoplasmic inwards viral transport</keyword>
<keyword id="KW-0238">DNA-binding</keyword>
<keyword id="KW-1035">Host cytoplasm</keyword>
<keyword id="KW-0945">Host-virus interaction</keyword>
<keyword id="KW-1177">Microtubular inwards viral transport</keyword>
<keyword id="KW-0597">Phosphoprotein</keyword>
<keyword id="KW-0677">Repeat</keyword>
<keyword id="KW-0694">RNA-binding</keyword>
<keyword id="KW-1144">T=4 icosahedral capsid protein</keyword>
<keyword id="KW-1163">Viral penetration into host nucleus</keyword>
<keyword id="KW-0946">Virion</keyword>
<keyword id="KW-1160">Virus entry into host cell</keyword>
<sequence>MDIDPYKEFGATVELLSFLPSDFFPSVRDLXDTASALYREALESPEHCSPHHTALRQAILCWGKLMTLATWVGNNLEDPASRDLVVNYVNTNMGLKIRQLLWFHISCLTFGRETVLEYLVSFGVWIRTPPAYRPPNAPILSTLPETTVVRRRDRGRSPRRRTPSPRRRRSQSPRRRRSQSRESQC</sequence>